<feature type="initiator methionine" description="Removed" evidence="5 11">
    <location>
        <position position="1"/>
    </location>
</feature>
<feature type="chain" id="PRO_0000203273" description="Eisosome protein 1">
    <location>
        <begin position="2"/>
        <end position="843"/>
    </location>
</feature>
<feature type="region of interest" description="Disordered" evidence="1">
    <location>
        <begin position="1"/>
        <end position="53"/>
    </location>
</feature>
<feature type="region of interest" description="Disordered" evidence="1">
    <location>
        <begin position="120"/>
        <end position="174"/>
    </location>
</feature>
<feature type="region of interest" description="Disordered" evidence="1">
    <location>
        <begin position="717"/>
        <end position="843"/>
    </location>
</feature>
<feature type="compositionally biased region" description="Basic residues" evidence="1">
    <location>
        <begin position="33"/>
        <end position="46"/>
    </location>
</feature>
<feature type="compositionally biased region" description="Polar residues" evidence="1">
    <location>
        <begin position="127"/>
        <end position="137"/>
    </location>
</feature>
<feature type="compositionally biased region" description="Polar residues" evidence="1">
    <location>
        <begin position="163"/>
        <end position="174"/>
    </location>
</feature>
<feature type="compositionally biased region" description="Low complexity" evidence="1">
    <location>
        <begin position="752"/>
        <end position="764"/>
    </location>
</feature>
<feature type="compositionally biased region" description="Basic and acidic residues" evidence="1">
    <location>
        <begin position="781"/>
        <end position="797"/>
    </location>
</feature>
<feature type="compositionally biased region" description="Polar residues" evidence="1">
    <location>
        <begin position="798"/>
        <end position="810"/>
    </location>
</feature>
<feature type="modified residue" description="N-acetylserine" evidence="5 11">
    <location>
        <position position="2"/>
    </location>
</feature>
<feature type="modified residue" description="Phosphoserine" evidence="5">
    <location>
        <position position="2"/>
    </location>
</feature>
<feature type="modified residue" description="Phosphoserine" evidence="10">
    <location>
        <position position="88"/>
    </location>
</feature>
<feature type="modified residue" description="Phosphoserine" evidence="6 8">
    <location>
        <position position="130"/>
    </location>
</feature>
<feature type="modified residue" description="Phosphoserine" evidence="10">
    <location>
        <position position="182"/>
    </location>
</feature>
<feature type="modified residue" description="Phosphoserine" evidence="7 9 10">
    <location>
        <position position="401"/>
    </location>
</feature>
<feature type="modified residue" description="Phosphoserine" evidence="5 6 7 10">
    <location>
        <position position="584"/>
    </location>
</feature>
<feature type="modified residue" description="Phosphoserine" evidence="9">
    <location>
        <position position="710"/>
    </location>
</feature>
<feature type="modified residue" description="Phosphothreonine" evidence="9 10">
    <location>
        <position position="720"/>
    </location>
</feature>
<feature type="modified residue" description="Phosphoserine" evidence="10">
    <location>
        <position position="763"/>
    </location>
</feature>
<feature type="modified residue" description="Phosphoserine" evidence="10">
    <location>
        <position position="775"/>
    </location>
</feature>
<feature type="modified residue" description="Phosphoserine" evidence="9">
    <location>
        <position position="816"/>
    </location>
</feature>
<feature type="modified residue" description="Phosphoserine" evidence="10">
    <location>
        <position position="828"/>
    </location>
</feature>
<feature type="modified residue" description="Phosphoserine" evidence="10">
    <location>
        <position position="829"/>
    </location>
</feature>
<feature type="modified residue" description="Phosphoserine" evidence="9 10">
    <location>
        <position position="838"/>
    </location>
</feature>
<protein>
    <recommendedName>
        <fullName>Eisosome protein 1</fullName>
    </recommendedName>
</protein>
<gene>
    <name type="primary">EIS1</name>
    <name type="ordered locus">YMR031C</name>
    <name type="ORF">YM9973.04C</name>
</gene>
<evidence type="ECO:0000256" key="1">
    <source>
        <dbReference type="SAM" id="MobiDB-lite"/>
    </source>
</evidence>
<evidence type="ECO:0000269" key="2">
    <source>
    </source>
</evidence>
<evidence type="ECO:0000269" key="3">
    <source>
    </source>
</evidence>
<evidence type="ECO:0000305" key="4"/>
<evidence type="ECO:0007744" key="5">
    <source>
    </source>
</evidence>
<evidence type="ECO:0007744" key="6">
    <source>
    </source>
</evidence>
<evidence type="ECO:0007744" key="7">
    <source>
    </source>
</evidence>
<evidence type="ECO:0007744" key="8">
    <source>
    </source>
</evidence>
<evidence type="ECO:0007744" key="9">
    <source>
    </source>
</evidence>
<evidence type="ECO:0007744" key="10">
    <source>
    </source>
</evidence>
<evidence type="ECO:0007744" key="11">
    <source>
    </source>
</evidence>
<reference key="1">
    <citation type="journal article" date="1997" name="Nature">
        <title>The nucleotide sequence of Saccharomyces cerevisiae chromosome XIII.</title>
        <authorList>
            <person name="Bowman S."/>
            <person name="Churcher C.M."/>
            <person name="Badcock K."/>
            <person name="Brown D."/>
            <person name="Chillingworth T."/>
            <person name="Connor R."/>
            <person name="Dedman K."/>
            <person name="Devlin K."/>
            <person name="Gentles S."/>
            <person name="Hamlin N."/>
            <person name="Hunt S."/>
            <person name="Jagels K."/>
            <person name="Lye G."/>
            <person name="Moule S."/>
            <person name="Odell C."/>
            <person name="Pearson D."/>
            <person name="Rajandream M.A."/>
            <person name="Rice P."/>
            <person name="Skelton J."/>
            <person name="Walsh S.V."/>
            <person name="Whitehead S."/>
            <person name="Barrell B.G."/>
        </authorList>
    </citation>
    <scope>NUCLEOTIDE SEQUENCE [LARGE SCALE GENOMIC DNA]</scope>
    <source>
        <strain>ATCC 204508 / S288c</strain>
    </source>
</reference>
<reference key="2">
    <citation type="journal article" date="2014" name="G3 (Bethesda)">
        <title>The reference genome sequence of Saccharomyces cerevisiae: Then and now.</title>
        <authorList>
            <person name="Engel S.R."/>
            <person name="Dietrich F.S."/>
            <person name="Fisk D.G."/>
            <person name="Binkley G."/>
            <person name="Balakrishnan R."/>
            <person name="Costanzo M.C."/>
            <person name="Dwight S.S."/>
            <person name="Hitz B.C."/>
            <person name="Karra K."/>
            <person name="Nash R.S."/>
            <person name="Weng S."/>
            <person name="Wong E.D."/>
            <person name="Lloyd P."/>
            <person name="Skrzypek M.S."/>
            <person name="Miyasato S.R."/>
            <person name="Simison M."/>
            <person name="Cherry J.M."/>
        </authorList>
    </citation>
    <scope>GENOME REANNOTATION</scope>
    <source>
        <strain>ATCC 204508 / S288c</strain>
    </source>
</reference>
<reference key="3">
    <citation type="journal article" date="2003" name="Nature">
        <title>Global analysis of protein localization in budding yeast.</title>
        <authorList>
            <person name="Huh W.-K."/>
            <person name="Falvo J.V."/>
            <person name="Gerke L.C."/>
            <person name="Carroll A.S."/>
            <person name="Howson R.W."/>
            <person name="Weissman J.S."/>
            <person name="O'Shea E.K."/>
        </authorList>
    </citation>
    <scope>SUBCELLULAR LOCATION [LARGE SCALE ANALYSIS]</scope>
</reference>
<reference key="4">
    <citation type="journal article" date="2003" name="Nature">
        <title>Global analysis of protein expression in yeast.</title>
        <authorList>
            <person name="Ghaemmaghami S."/>
            <person name="Huh W.-K."/>
            <person name="Bower K."/>
            <person name="Howson R.W."/>
            <person name="Belle A."/>
            <person name="Dephoure N."/>
            <person name="O'Shea E.K."/>
            <person name="Weissman J.S."/>
        </authorList>
    </citation>
    <scope>LEVEL OF PROTEIN EXPRESSION [LARGE SCALE ANALYSIS]</scope>
</reference>
<reference key="5">
    <citation type="journal article" date="2005" name="Mol. Cell. Proteomics">
        <title>Quantitative phosphoproteomics applied to the yeast pheromone signaling pathway.</title>
        <authorList>
            <person name="Gruhler A."/>
            <person name="Olsen J.V."/>
            <person name="Mohammed S."/>
            <person name="Mortensen P."/>
            <person name="Faergeman N.J."/>
            <person name="Mann M."/>
            <person name="Jensen O.N."/>
        </authorList>
    </citation>
    <scope>ACETYLATION [LARGE SCALE ANALYSIS] AT SER-2</scope>
    <scope>PHOSPHORYLATION [LARGE SCALE ANALYSIS] AT SER-2 AND SER-584</scope>
    <scope>CLEAVAGE OF INITIATOR METHIONINE [LARGE SCALE ANALYSIS]</scope>
    <scope>IDENTIFICATION BY MASS SPECTROMETRY [LARGE SCALE ANALYSIS]</scope>
    <source>
        <strain>YAL6B</strain>
    </source>
</reference>
<reference key="6">
    <citation type="journal article" date="2007" name="J. Proteome Res.">
        <title>Large-scale phosphorylation analysis of alpha-factor-arrested Saccharomyces cerevisiae.</title>
        <authorList>
            <person name="Li X."/>
            <person name="Gerber S.A."/>
            <person name="Rudner A.D."/>
            <person name="Beausoleil S.A."/>
            <person name="Haas W."/>
            <person name="Villen J."/>
            <person name="Elias J.E."/>
            <person name="Gygi S.P."/>
        </authorList>
    </citation>
    <scope>PHOSPHORYLATION [LARGE SCALE ANALYSIS] AT SER-401 AND SER-584</scope>
    <scope>IDENTIFICATION BY MASS SPECTROMETRY [LARGE SCALE ANALYSIS]</scope>
    <source>
        <strain>ADR376</strain>
    </source>
</reference>
<reference key="7">
    <citation type="journal article" date="2007" name="Mol. Cell. Proteomics">
        <title>Profiling phosphoproteins of yeast mitochondria reveals a role of phosphorylation in assembly of the ATP synthase.</title>
        <authorList>
            <person name="Reinders J."/>
            <person name="Wagner K."/>
            <person name="Zahedi R.P."/>
            <person name="Stojanovski D."/>
            <person name="Eyrich B."/>
            <person name="van der Laan M."/>
            <person name="Rehling P."/>
            <person name="Sickmann A."/>
            <person name="Pfanner N."/>
            <person name="Meisinger C."/>
        </authorList>
    </citation>
    <scope>PHOSPHORYLATION [LARGE SCALE ANALYSIS] AT SER-130</scope>
    <scope>IDENTIFICATION BY MASS SPECTROMETRY [LARGE SCALE ANALYSIS]</scope>
    <source>
        <strain>ATCC 76625 / YPH499</strain>
    </source>
</reference>
<reference key="8">
    <citation type="journal article" date="2007" name="Proc. Natl. Acad. Sci. U.S.A.">
        <title>Analysis of phosphorylation sites on proteins from Saccharomyces cerevisiae by electron transfer dissociation (ETD) mass spectrometry.</title>
        <authorList>
            <person name="Chi A."/>
            <person name="Huttenhower C."/>
            <person name="Geer L.Y."/>
            <person name="Coon J.J."/>
            <person name="Syka J.E.P."/>
            <person name="Bai D.L."/>
            <person name="Shabanowitz J."/>
            <person name="Burke D.J."/>
            <person name="Troyanskaya O.G."/>
            <person name="Hunt D.F."/>
        </authorList>
    </citation>
    <scope>PHOSPHORYLATION [LARGE SCALE ANALYSIS] AT SER-130 AND SER-584</scope>
    <scope>IDENTIFICATION BY MASS SPECTROMETRY [LARGE SCALE ANALYSIS]</scope>
</reference>
<reference key="9">
    <citation type="journal article" date="2008" name="Mol. Cell. Proteomics">
        <title>A multidimensional chromatography technology for in-depth phosphoproteome analysis.</title>
        <authorList>
            <person name="Albuquerque C.P."/>
            <person name="Smolka M.B."/>
            <person name="Payne S.H."/>
            <person name="Bafna V."/>
            <person name="Eng J."/>
            <person name="Zhou H."/>
        </authorList>
    </citation>
    <scope>PHOSPHORYLATION [LARGE SCALE ANALYSIS] AT SER-401; SER-710; THR-720; SER-816 AND SER-838</scope>
    <scope>IDENTIFICATION BY MASS SPECTROMETRY [LARGE SCALE ANALYSIS]</scope>
</reference>
<reference key="10">
    <citation type="journal article" date="2009" name="Mol. Cell. Proteomics">
        <title>Unifying fluorescence microscopy and mass spectrometry for studying protein complexes in cells.</title>
        <authorList>
            <person name="Deng C."/>
            <person name="Xiong X."/>
            <person name="Krutchinsky A.N."/>
        </authorList>
    </citation>
    <scope>IDENTIFICATION BY MASS SPECTROMETRY</scope>
    <scope>ASSOCIATION WITH THE EISOSOME</scope>
    <scope>SUBCELLULAR LOCATION</scope>
</reference>
<reference key="11">
    <citation type="journal article" date="2009" name="Science">
        <title>Global analysis of Cdk1 substrate phosphorylation sites provides insights into evolution.</title>
        <authorList>
            <person name="Holt L.J."/>
            <person name="Tuch B.B."/>
            <person name="Villen J."/>
            <person name="Johnson A.D."/>
            <person name="Gygi S.P."/>
            <person name="Morgan D.O."/>
        </authorList>
    </citation>
    <scope>PHOSPHORYLATION [LARGE SCALE ANALYSIS] AT SER-88; SER-182; SER-401; SER-584; THR-720; SER-763; SER-775; SER-828; SER-829 AND SER-838</scope>
    <scope>IDENTIFICATION BY MASS SPECTROMETRY [LARGE SCALE ANALYSIS]</scope>
</reference>
<reference key="12">
    <citation type="journal article" date="2010" name="Nat. Struct. Mol. Biol.">
        <title>A plasma-membrane E-MAP reveals links of the eisosome with sphingolipid metabolism and endosomal trafficking.</title>
        <authorList>
            <person name="Aguilar P.S."/>
            <person name="Frohlich F."/>
            <person name="Rehman M."/>
            <person name="Shales M."/>
            <person name="Ulitsky I."/>
            <person name="Olivera-Couto A."/>
            <person name="Braberg H."/>
            <person name="Shamir R."/>
            <person name="Walter P."/>
            <person name="Mann M."/>
            <person name="Ejsing C.S."/>
            <person name="Krogan N.J."/>
            <person name="Walther T.C."/>
        </authorList>
    </citation>
    <scope>SUBCELLULAR LOCATION</scope>
    <scope>ASSOCIATION WITH THE EISOSOME</scope>
    <scope>FUNCTION</scope>
</reference>
<reference key="13">
    <citation type="journal article" date="2012" name="Proc. Natl. Acad. Sci. U.S.A.">
        <title>N-terminal acetylome analyses and functional insights of the N-terminal acetyltransferase NatB.</title>
        <authorList>
            <person name="Van Damme P."/>
            <person name="Lasa M."/>
            <person name="Polevoda B."/>
            <person name="Gazquez C."/>
            <person name="Elosegui-Artola A."/>
            <person name="Kim D.S."/>
            <person name="De Juan-Pardo E."/>
            <person name="Demeyer K."/>
            <person name="Hole K."/>
            <person name="Larrea E."/>
            <person name="Timmerman E."/>
            <person name="Prieto J."/>
            <person name="Arnesen T."/>
            <person name="Sherman F."/>
            <person name="Gevaert K."/>
            <person name="Aldabe R."/>
        </authorList>
    </citation>
    <scope>ACETYLATION [LARGE SCALE ANALYSIS] AT SER-2</scope>
    <scope>CLEAVAGE OF INITIATOR METHIONINE [LARGE SCALE ANALYSIS]</scope>
    <scope>IDENTIFICATION BY MASS SPECTROMETRY [LARGE SCALE ANALYSIS]</scope>
</reference>
<comment type="function">
    <text evidence="3">Required for normal formation of eisosomes, large cytoplasmic protein assemblies that localize to specialized domains on plasma membrane and mark the site of endocytosis.</text>
</comment>
<comment type="interaction">
    <interactant intactId="EBI-28061">
        <id>Q05050</id>
    </interactant>
    <interactant intactId="EBI-23225">
        <id>P53252</id>
        <label>PIL1</label>
    </interactant>
    <organismsDiffer>false</organismsDiffer>
    <experiments>4</experiments>
</comment>
<comment type="subcellular location">
    <subcellularLocation>
        <location>Cytoplasmic granule</location>
    </subcellularLocation>
    <subcellularLocation>
        <location>Cell membrane</location>
        <topology>Peripheral membrane protein</topology>
        <orientation>Cytoplasmic side</orientation>
    </subcellularLocation>
    <text>Localizes at the eisosomes.</text>
</comment>
<comment type="miscellaneous">
    <text evidence="2">Present with 5570 molecules/cell in log phase SD medium.</text>
</comment>
<comment type="similarity">
    <text evidence="4">Belongs to the EIS1 family.</text>
</comment>
<organism>
    <name type="scientific">Saccharomyces cerevisiae (strain ATCC 204508 / S288c)</name>
    <name type="common">Baker's yeast</name>
    <dbReference type="NCBI Taxonomy" id="559292"/>
    <lineage>
        <taxon>Eukaryota</taxon>
        <taxon>Fungi</taxon>
        <taxon>Dikarya</taxon>
        <taxon>Ascomycota</taxon>
        <taxon>Saccharomycotina</taxon>
        <taxon>Saccharomycetes</taxon>
        <taxon>Saccharomycetales</taxon>
        <taxon>Saccharomycetaceae</taxon>
        <taxon>Saccharomyces</taxon>
    </lineage>
</organism>
<dbReference type="EMBL" id="Z49213">
    <property type="protein sequence ID" value="CAA89146.1"/>
    <property type="molecule type" value="Genomic_DNA"/>
</dbReference>
<dbReference type="EMBL" id="BK006946">
    <property type="protein sequence ID" value="DAA09929.1"/>
    <property type="molecule type" value="Genomic_DNA"/>
</dbReference>
<dbReference type="PIR" id="S53947">
    <property type="entry name" value="S53947"/>
</dbReference>
<dbReference type="RefSeq" id="NP_013744.1">
    <property type="nucleotide sequence ID" value="NM_001182527.1"/>
</dbReference>
<dbReference type="SMR" id="Q05050"/>
<dbReference type="BioGRID" id="35203">
    <property type="interactions" value="139"/>
</dbReference>
<dbReference type="DIP" id="DIP-7982N"/>
<dbReference type="FunCoup" id="Q05050">
    <property type="interactions" value="88"/>
</dbReference>
<dbReference type="IntAct" id="Q05050">
    <property type="interactions" value="15"/>
</dbReference>
<dbReference type="MINT" id="Q05050"/>
<dbReference type="STRING" id="4932.YMR031C"/>
<dbReference type="TCDB" id="8.A.148.1.1">
    <property type="family name" value="the plasma membrane organizing center, eisosome (eisosome) family"/>
</dbReference>
<dbReference type="GlyGen" id="Q05050">
    <property type="glycosylation" value="3 sites, 1 O-linked glycan (3 sites)"/>
</dbReference>
<dbReference type="iPTMnet" id="Q05050"/>
<dbReference type="PaxDb" id="4932-YMR031C"/>
<dbReference type="PeptideAtlas" id="Q05050"/>
<dbReference type="EnsemblFungi" id="YMR031C_mRNA">
    <property type="protein sequence ID" value="YMR031C"/>
    <property type="gene ID" value="YMR031C"/>
</dbReference>
<dbReference type="GeneID" id="855047"/>
<dbReference type="KEGG" id="sce:YMR031C"/>
<dbReference type="AGR" id="SGD:S000004633"/>
<dbReference type="SGD" id="S000004633">
    <property type="gene designation" value="EIS1"/>
</dbReference>
<dbReference type="VEuPathDB" id="FungiDB:YMR031C"/>
<dbReference type="eggNOG" id="ENOG502S8WV">
    <property type="taxonomic scope" value="Eukaryota"/>
</dbReference>
<dbReference type="GeneTree" id="ENSGT00940000176658"/>
<dbReference type="HOGENOM" id="CLU_013228_0_0_1"/>
<dbReference type="InParanoid" id="Q05050"/>
<dbReference type="OMA" id="EHTFSGF"/>
<dbReference type="OrthoDB" id="4070583at2759"/>
<dbReference type="BioCyc" id="YEAST:G3O-32736-MONOMER"/>
<dbReference type="BioGRID-ORCS" id="855047">
    <property type="hits" value="1 hit in 10 CRISPR screens"/>
</dbReference>
<dbReference type="PRO" id="PR:Q05050"/>
<dbReference type="Proteomes" id="UP000002311">
    <property type="component" value="Chromosome XIII"/>
</dbReference>
<dbReference type="RNAct" id="Q05050">
    <property type="molecule type" value="protein"/>
</dbReference>
<dbReference type="GO" id="GO:0071944">
    <property type="term" value="C:cell periphery"/>
    <property type="evidence" value="ECO:0007005"/>
    <property type="project" value="SGD"/>
</dbReference>
<dbReference type="GO" id="GO:0005737">
    <property type="term" value="C:cytoplasm"/>
    <property type="evidence" value="ECO:0007005"/>
    <property type="project" value="SGD"/>
</dbReference>
<dbReference type="GO" id="GO:0032126">
    <property type="term" value="C:eisosome"/>
    <property type="evidence" value="ECO:0000314"/>
    <property type="project" value="SGD"/>
</dbReference>
<dbReference type="GO" id="GO:0005739">
    <property type="term" value="C:mitochondrion"/>
    <property type="evidence" value="ECO:0007005"/>
    <property type="project" value="SGD"/>
</dbReference>
<dbReference type="GO" id="GO:0005886">
    <property type="term" value="C:plasma membrane"/>
    <property type="evidence" value="ECO:0007005"/>
    <property type="project" value="SGD"/>
</dbReference>
<dbReference type="GO" id="GO:0070941">
    <property type="term" value="P:eisosome assembly"/>
    <property type="evidence" value="ECO:0000315"/>
    <property type="project" value="SGD"/>
</dbReference>
<dbReference type="InterPro" id="IPR024527">
    <property type="entry name" value="Eisosome1"/>
</dbReference>
<dbReference type="PANTHER" id="PTHR28298">
    <property type="entry name" value="EISOSOME PROTEIN 1"/>
    <property type="match status" value="1"/>
</dbReference>
<dbReference type="PANTHER" id="PTHR28298:SF1">
    <property type="entry name" value="EISOSOME PROTEIN 1"/>
    <property type="match status" value="1"/>
</dbReference>
<dbReference type="Pfam" id="PF12757">
    <property type="entry name" value="Eisosome1"/>
    <property type="match status" value="1"/>
</dbReference>
<accession>Q05050</accession>
<accession>D6VZK5</accession>
<name>EIS1_YEAST</name>
<sequence>MSLISAVEDRDIHNIGKTSGGGSRTSSITSSKKSLKHGSKSLRKPKVYQTTGEPLSREALYKAKLKYGVYQSPAQSYSIGVSDAHAASDKAANLAHDNQTTVEAYKRMFIDPNATKAASKMGPKVVRNNSITSATSKTSKESQTKRKSKESPGAAASKAYSMTMETTSLSSQTNSRSYSITSASSVLSGASGSFNSTVNPKPKTLNLEKVLVGAEKKAESRIKERWEPEKTNFQYGVKTDEHGNLNQFSFSNEMMNNIMAKVDAPKAQDLQKVKKVSAEKEAKSMKFALGAANAVKDMHPGEDIDKSIALKAQKRETYLSQLTSQQVLTLARANVDRQLDIIEKSDMHRKLFTNMEYNKAAVAVAQSNHQKKTEFHNKINMGGGLFLSPEDITKIASGLISPVLGEVSERAEAQRAMDEEIAERTEAYNKSSNEWETMERSIISNDAKVLTTTANRHQTEKKTSQEKIKASFDALVARMDTKVAERETLLEDTKSKEIEFKKQMQQELKDEKARLDQDLEEWGKKCEQDITEARKEQEELLKPYHDDLANAEAEHKTLVEERDEINAEISRLQDAIVDHKRKISGYGNDLDAQKNRNIREDDKLLELGQTKESLESHLNDDVIILANKAKEQAELSTKEARLKQLEVDSLINERKSELNATEIELKKEKLNLLEAMKDVASARGDDKIDEEKVKKLIGMTSEEYLTQNKSVEKNVEDLPTQLEKIEEGDELKKEEIVGAETKNSGGDGVPVSTAAKEATETSSAVQTKEPEEKISIGNKSSGKEDANDCKSAEHSKEISVSQKAGNNKSLGVSPDSLEHTFSGFSQGSSIEDDQDAISNQEKK</sequence>
<keyword id="KW-0007">Acetylation</keyword>
<keyword id="KW-1003">Cell membrane</keyword>
<keyword id="KW-0472">Membrane</keyword>
<keyword id="KW-0597">Phosphoprotein</keyword>
<keyword id="KW-1185">Reference proteome</keyword>
<proteinExistence type="evidence at protein level"/>